<organism>
    <name type="scientific">Schizosaccharomyces pombe (strain 972 / ATCC 24843)</name>
    <name type="common">Fission yeast</name>
    <dbReference type="NCBI Taxonomy" id="284812"/>
    <lineage>
        <taxon>Eukaryota</taxon>
        <taxon>Fungi</taxon>
        <taxon>Dikarya</taxon>
        <taxon>Ascomycota</taxon>
        <taxon>Taphrinomycotina</taxon>
        <taxon>Schizosaccharomycetes</taxon>
        <taxon>Schizosaccharomycetales</taxon>
        <taxon>Schizosaccharomycetaceae</taxon>
        <taxon>Schizosaccharomyces</taxon>
    </lineage>
</organism>
<gene>
    <name type="primary">oac1</name>
    <name type="ORF">SPAC139.02c</name>
</gene>
<dbReference type="EMBL" id="CU329670">
    <property type="protein sequence ID" value="CAB59616.1"/>
    <property type="molecule type" value="Genomic_DNA"/>
</dbReference>
<dbReference type="PIR" id="T37603">
    <property type="entry name" value="T37603"/>
</dbReference>
<dbReference type="RefSeq" id="NP_593169.1">
    <property type="nucleotide sequence ID" value="NM_001018566.2"/>
</dbReference>
<dbReference type="SMR" id="Q9UTN1"/>
<dbReference type="BioGRID" id="278282">
    <property type="interactions" value="2"/>
</dbReference>
<dbReference type="FunCoup" id="Q9UTN1">
    <property type="interactions" value="71"/>
</dbReference>
<dbReference type="STRING" id="284812.Q9UTN1"/>
<dbReference type="iPTMnet" id="Q9UTN1"/>
<dbReference type="PaxDb" id="4896-SPAC139.02c.1"/>
<dbReference type="EnsemblFungi" id="SPAC139.02c.1">
    <property type="protein sequence ID" value="SPAC139.02c.1:pep"/>
    <property type="gene ID" value="SPAC139.02c"/>
</dbReference>
<dbReference type="GeneID" id="2541790"/>
<dbReference type="KEGG" id="spo:2541790"/>
<dbReference type="PomBase" id="SPAC139.02c">
    <property type="gene designation" value="oac1"/>
</dbReference>
<dbReference type="VEuPathDB" id="FungiDB:SPAC139.02c"/>
<dbReference type="eggNOG" id="KOG0755">
    <property type="taxonomic scope" value="Eukaryota"/>
</dbReference>
<dbReference type="HOGENOM" id="CLU_015166_14_3_1"/>
<dbReference type="InParanoid" id="Q9UTN1"/>
<dbReference type="OMA" id="GFYDPMR"/>
<dbReference type="PhylomeDB" id="Q9UTN1"/>
<dbReference type="PRO" id="PR:Q9UTN1"/>
<dbReference type="Proteomes" id="UP000002485">
    <property type="component" value="Chromosome I"/>
</dbReference>
<dbReference type="GO" id="GO:0005743">
    <property type="term" value="C:mitochondrial inner membrane"/>
    <property type="evidence" value="ECO:0000250"/>
    <property type="project" value="PomBase"/>
</dbReference>
<dbReference type="GO" id="GO:0005739">
    <property type="term" value="C:mitochondrion"/>
    <property type="evidence" value="ECO:0007005"/>
    <property type="project" value="PomBase"/>
</dbReference>
<dbReference type="GO" id="GO:0034658">
    <property type="term" value="F:isopropylmalate transmembrane transporter activity"/>
    <property type="evidence" value="ECO:0000266"/>
    <property type="project" value="PomBase"/>
</dbReference>
<dbReference type="GO" id="GO:0015131">
    <property type="term" value="F:oxaloacetate transmembrane transporter activity"/>
    <property type="evidence" value="ECO:0000266"/>
    <property type="project" value="PomBase"/>
</dbReference>
<dbReference type="GO" id="GO:0015116">
    <property type="term" value="F:sulfate transmembrane transporter activity"/>
    <property type="evidence" value="ECO:0000266"/>
    <property type="project" value="PomBase"/>
</dbReference>
<dbReference type="GO" id="GO:0015117">
    <property type="term" value="F:thiosulfate transmembrane transporter activity"/>
    <property type="evidence" value="ECO:0000266"/>
    <property type="project" value="PomBase"/>
</dbReference>
<dbReference type="GO" id="GO:0022857">
    <property type="term" value="F:transmembrane transporter activity"/>
    <property type="evidence" value="ECO:0000318"/>
    <property type="project" value="GO_Central"/>
</dbReference>
<dbReference type="GO" id="GO:1990556">
    <property type="term" value="P:mitochondrial isopropylmalate transmembrane transport"/>
    <property type="evidence" value="ECO:0000266"/>
    <property type="project" value="PomBase"/>
</dbReference>
<dbReference type="GO" id="GO:1990555">
    <property type="term" value="P:mitochondrial oxaloacetate transmembrane transport"/>
    <property type="evidence" value="ECO:0000266"/>
    <property type="project" value="PomBase"/>
</dbReference>
<dbReference type="GO" id="GO:1990557">
    <property type="term" value="P:mitochondrial sulfate transmembrane transport"/>
    <property type="evidence" value="ECO:0000266"/>
    <property type="project" value="PomBase"/>
</dbReference>
<dbReference type="GO" id="GO:0006820">
    <property type="term" value="P:monoatomic anion transport"/>
    <property type="evidence" value="ECO:0000303"/>
    <property type="project" value="PomBase"/>
</dbReference>
<dbReference type="FunFam" id="1.50.40.10:FF:000039">
    <property type="entry name" value="Solute carrier family 25 member 35"/>
    <property type="match status" value="1"/>
</dbReference>
<dbReference type="Gene3D" id="1.50.40.10">
    <property type="entry name" value="Mitochondrial carrier domain"/>
    <property type="match status" value="1"/>
</dbReference>
<dbReference type="InterPro" id="IPR051508">
    <property type="entry name" value="Mito_Carrier_Antiporter"/>
</dbReference>
<dbReference type="InterPro" id="IPR018108">
    <property type="entry name" value="Mitochondrial_sb/sol_carrier"/>
</dbReference>
<dbReference type="InterPro" id="IPR023395">
    <property type="entry name" value="Mt_carrier_dom_sf"/>
</dbReference>
<dbReference type="PANTHER" id="PTHR45928">
    <property type="entry name" value="RE38146P"/>
    <property type="match status" value="1"/>
</dbReference>
<dbReference type="PANTHER" id="PTHR45928:SF1">
    <property type="entry name" value="RE38146P"/>
    <property type="match status" value="1"/>
</dbReference>
<dbReference type="Pfam" id="PF00153">
    <property type="entry name" value="Mito_carr"/>
    <property type="match status" value="3"/>
</dbReference>
<dbReference type="SUPFAM" id="SSF103506">
    <property type="entry name" value="Mitochondrial carrier"/>
    <property type="match status" value="1"/>
</dbReference>
<dbReference type="PROSITE" id="PS50920">
    <property type="entry name" value="SOLCAR"/>
    <property type="match status" value="3"/>
</dbReference>
<keyword id="KW-0472">Membrane</keyword>
<keyword id="KW-0496">Mitochondrion</keyword>
<keyword id="KW-0999">Mitochondrion inner membrane</keyword>
<keyword id="KW-1185">Reference proteome</keyword>
<keyword id="KW-0677">Repeat</keyword>
<keyword id="KW-0812">Transmembrane</keyword>
<keyword id="KW-1133">Transmembrane helix</keyword>
<keyword id="KW-0813">Transport</keyword>
<protein>
    <recommendedName>
        <fullName>Mitochondrial oxaloacetate transport protein</fullName>
    </recommendedName>
</protein>
<comment type="function">
    <text evidence="1">Antiporter that exchanges dicarboxylates and sulfur oxoanions across the inner membrane of mitochondria. Exports alpha-isopropylmalate from mitochondrial matrix to the cytosol, where it serves as a precursor for leucine biosynthesis.</text>
</comment>
<comment type="catalytic activity">
    <reaction evidence="1">
        <text>a dicarboxylate(in) + sulfate(out) = a dicarboxylate(out) + sulfate(in)</text>
        <dbReference type="Rhea" id="RHEA:76595"/>
        <dbReference type="ChEBI" id="CHEBI:16189"/>
        <dbReference type="ChEBI" id="CHEBI:28965"/>
    </reaction>
</comment>
<comment type="catalytic activity">
    <reaction evidence="1">
        <text>(2S)-2-isopropylmalate(in) + sulfate(out) = (2S)-2-isopropylmalate(out) + sulfate(in)</text>
        <dbReference type="Rhea" id="RHEA:76343"/>
        <dbReference type="ChEBI" id="CHEBI:1178"/>
        <dbReference type="ChEBI" id="CHEBI:16189"/>
    </reaction>
    <physiologicalReaction direction="left-to-right" evidence="1">
        <dbReference type="Rhea" id="RHEA:76344"/>
    </physiologicalReaction>
    <physiologicalReaction direction="right-to-left" evidence="1">
        <dbReference type="Rhea" id="RHEA:76345"/>
    </physiologicalReaction>
</comment>
<comment type="catalytic activity">
    <reaction evidence="1">
        <text>(2R,3S)-3-isopropylmalate(in) + sulfate(out) = (2R,3S)-3-isopropylmalate(out) + sulfate(in)</text>
        <dbReference type="Rhea" id="RHEA:76347"/>
        <dbReference type="ChEBI" id="CHEBI:16189"/>
        <dbReference type="ChEBI" id="CHEBI:35121"/>
    </reaction>
    <physiologicalReaction direction="left-to-right" evidence="1">
        <dbReference type="Rhea" id="RHEA:76348"/>
    </physiologicalReaction>
    <physiologicalReaction direction="right-to-left" evidence="1">
        <dbReference type="Rhea" id="RHEA:76349"/>
    </physiologicalReaction>
</comment>
<comment type="catalytic activity">
    <reaction evidence="1">
        <text>malonate(in) + sulfate(out) = malonate(out) + sulfate(in)</text>
        <dbReference type="Rhea" id="RHEA:73195"/>
        <dbReference type="ChEBI" id="CHEBI:15792"/>
        <dbReference type="ChEBI" id="CHEBI:16189"/>
    </reaction>
    <physiologicalReaction direction="left-to-right" evidence="1">
        <dbReference type="Rhea" id="RHEA:73196"/>
    </physiologicalReaction>
    <physiologicalReaction direction="right-to-left" evidence="1">
        <dbReference type="Rhea" id="RHEA:73197"/>
    </physiologicalReaction>
</comment>
<comment type="catalytic activity">
    <reaction evidence="1">
        <text>oxaloacetate(in) + sulfate(out) = oxaloacetate(out) + sulfate(in)</text>
        <dbReference type="Rhea" id="RHEA:76351"/>
        <dbReference type="ChEBI" id="CHEBI:16189"/>
        <dbReference type="ChEBI" id="CHEBI:16452"/>
    </reaction>
    <physiologicalReaction direction="left-to-right" evidence="1">
        <dbReference type="Rhea" id="RHEA:76352"/>
    </physiologicalReaction>
    <physiologicalReaction direction="right-to-left" evidence="1">
        <dbReference type="Rhea" id="RHEA:76353"/>
    </physiologicalReaction>
</comment>
<comment type="catalytic activity">
    <reaction evidence="1">
        <text>thiosulfate(in) + sulfate(out) = thiosulfate(out) + sulfate(in)</text>
        <dbReference type="Rhea" id="RHEA:73215"/>
        <dbReference type="ChEBI" id="CHEBI:16189"/>
        <dbReference type="ChEBI" id="CHEBI:33542"/>
    </reaction>
    <physiologicalReaction direction="left-to-right" evidence="1">
        <dbReference type="Rhea" id="RHEA:73216"/>
    </physiologicalReaction>
    <physiologicalReaction direction="right-to-left" evidence="1">
        <dbReference type="Rhea" id="RHEA:73217"/>
    </physiologicalReaction>
</comment>
<comment type="subcellular location">
    <subcellularLocation>
        <location>Mitochondrion inner membrane</location>
        <topology>Multi-pass membrane protein</topology>
    </subcellularLocation>
</comment>
<comment type="similarity">
    <text evidence="3">Belongs to the mitochondrial carrier (TC 2.A.29) family.</text>
</comment>
<proteinExistence type="inferred from homology"/>
<reference key="1">
    <citation type="journal article" date="2002" name="Nature">
        <title>The genome sequence of Schizosaccharomyces pombe.</title>
        <authorList>
            <person name="Wood V."/>
            <person name="Gwilliam R."/>
            <person name="Rajandream M.A."/>
            <person name="Lyne M.H."/>
            <person name="Lyne R."/>
            <person name="Stewart A."/>
            <person name="Sgouros J.G."/>
            <person name="Peat N."/>
            <person name="Hayles J."/>
            <person name="Baker S.G."/>
            <person name="Basham D."/>
            <person name="Bowman S."/>
            <person name="Brooks K."/>
            <person name="Brown D."/>
            <person name="Brown S."/>
            <person name="Chillingworth T."/>
            <person name="Churcher C.M."/>
            <person name="Collins M."/>
            <person name="Connor R."/>
            <person name="Cronin A."/>
            <person name="Davis P."/>
            <person name="Feltwell T."/>
            <person name="Fraser A."/>
            <person name="Gentles S."/>
            <person name="Goble A."/>
            <person name="Hamlin N."/>
            <person name="Harris D.E."/>
            <person name="Hidalgo J."/>
            <person name="Hodgson G."/>
            <person name="Holroyd S."/>
            <person name="Hornsby T."/>
            <person name="Howarth S."/>
            <person name="Huckle E.J."/>
            <person name="Hunt S."/>
            <person name="Jagels K."/>
            <person name="James K.D."/>
            <person name="Jones L."/>
            <person name="Jones M."/>
            <person name="Leather S."/>
            <person name="McDonald S."/>
            <person name="McLean J."/>
            <person name="Mooney P."/>
            <person name="Moule S."/>
            <person name="Mungall K.L."/>
            <person name="Murphy L.D."/>
            <person name="Niblett D."/>
            <person name="Odell C."/>
            <person name="Oliver K."/>
            <person name="O'Neil S."/>
            <person name="Pearson D."/>
            <person name="Quail M.A."/>
            <person name="Rabbinowitsch E."/>
            <person name="Rutherford K.M."/>
            <person name="Rutter S."/>
            <person name="Saunders D."/>
            <person name="Seeger K."/>
            <person name="Sharp S."/>
            <person name="Skelton J."/>
            <person name="Simmonds M.N."/>
            <person name="Squares R."/>
            <person name="Squares S."/>
            <person name="Stevens K."/>
            <person name="Taylor K."/>
            <person name="Taylor R.G."/>
            <person name="Tivey A."/>
            <person name="Walsh S.V."/>
            <person name="Warren T."/>
            <person name="Whitehead S."/>
            <person name="Woodward J.R."/>
            <person name="Volckaert G."/>
            <person name="Aert R."/>
            <person name="Robben J."/>
            <person name="Grymonprez B."/>
            <person name="Weltjens I."/>
            <person name="Vanstreels E."/>
            <person name="Rieger M."/>
            <person name="Schaefer M."/>
            <person name="Mueller-Auer S."/>
            <person name="Gabel C."/>
            <person name="Fuchs M."/>
            <person name="Duesterhoeft A."/>
            <person name="Fritzc C."/>
            <person name="Holzer E."/>
            <person name="Moestl D."/>
            <person name="Hilbert H."/>
            <person name="Borzym K."/>
            <person name="Langer I."/>
            <person name="Beck A."/>
            <person name="Lehrach H."/>
            <person name="Reinhardt R."/>
            <person name="Pohl T.M."/>
            <person name="Eger P."/>
            <person name="Zimmermann W."/>
            <person name="Wedler H."/>
            <person name="Wambutt R."/>
            <person name="Purnelle B."/>
            <person name="Goffeau A."/>
            <person name="Cadieu E."/>
            <person name="Dreano S."/>
            <person name="Gloux S."/>
            <person name="Lelaure V."/>
            <person name="Mottier S."/>
            <person name="Galibert F."/>
            <person name="Aves S.J."/>
            <person name="Xiang Z."/>
            <person name="Hunt C."/>
            <person name="Moore K."/>
            <person name="Hurst S.M."/>
            <person name="Lucas M."/>
            <person name="Rochet M."/>
            <person name="Gaillardin C."/>
            <person name="Tallada V.A."/>
            <person name="Garzon A."/>
            <person name="Thode G."/>
            <person name="Daga R.R."/>
            <person name="Cruzado L."/>
            <person name="Jimenez J."/>
            <person name="Sanchez M."/>
            <person name="del Rey F."/>
            <person name="Benito J."/>
            <person name="Dominguez A."/>
            <person name="Revuelta J.L."/>
            <person name="Moreno S."/>
            <person name="Armstrong J."/>
            <person name="Forsburg S.L."/>
            <person name="Cerutti L."/>
            <person name="Lowe T."/>
            <person name="McCombie W.R."/>
            <person name="Paulsen I."/>
            <person name="Potashkin J."/>
            <person name="Shpakovski G.V."/>
            <person name="Ussery D."/>
            <person name="Barrell B.G."/>
            <person name="Nurse P."/>
        </authorList>
    </citation>
    <scope>NUCLEOTIDE SEQUENCE [LARGE SCALE GENOMIC DNA]</scope>
    <source>
        <strain>972 / ATCC 24843</strain>
    </source>
</reference>
<accession>Q9UTN1</accession>
<evidence type="ECO:0000250" key="1">
    <source>
        <dbReference type="UniProtKB" id="P32332"/>
    </source>
</evidence>
<evidence type="ECO:0000255" key="2"/>
<evidence type="ECO:0000305" key="3"/>
<name>OAC1_SCHPO</name>
<feature type="chain" id="PRO_0000310788" description="Mitochondrial oxaloacetate transport protein">
    <location>
        <begin position="1"/>
        <end position="320"/>
    </location>
</feature>
<feature type="transmembrane region" description="Helical; Name=1" evidence="2">
    <location>
        <begin position="26"/>
        <end position="47"/>
    </location>
</feature>
<feature type="transmembrane region" description="Helical; Name=2" evidence="2">
    <location>
        <begin position="91"/>
        <end position="111"/>
    </location>
</feature>
<feature type="transmembrane region" description="Helical; Name=3" evidence="2">
    <location>
        <begin position="129"/>
        <end position="145"/>
    </location>
</feature>
<feature type="transmembrane region" description="Helical; Name=4" evidence="2">
    <location>
        <begin position="197"/>
        <end position="217"/>
    </location>
</feature>
<feature type="transmembrane region" description="Helical; Name=5" evidence="2">
    <location>
        <begin position="233"/>
        <end position="253"/>
    </location>
</feature>
<feature type="transmembrane region" description="Helical; Name=6" evidence="2">
    <location>
        <begin position="285"/>
        <end position="306"/>
    </location>
</feature>
<feature type="repeat" description="Solcar 1">
    <location>
        <begin position="21"/>
        <end position="114"/>
    </location>
</feature>
<feature type="repeat" description="Solcar 2">
    <location>
        <begin position="126"/>
        <end position="218"/>
    </location>
</feature>
<feature type="repeat" description="Solcar 3">
    <location>
        <begin position="227"/>
        <end position="313"/>
    </location>
</feature>
<sequence length="320" mass="35548">MSEKQTIKALPAHNPTQVKKLGPVSGFLSGGLAACGAVTLTNPFEVIKTRFQLQGQLTKLDPSKRIYKSVGQAFSLIARHEGIRGLQRGLGTAYVYQICLNGCRLGFYEPIRRTLNTWFLDDPKGNKLAINVASGAGSGLCGALFGSPFFLVKTRMQSYSPKFPVGQQYGYKHIFNAFSRIIKENGVKGLFVGADAAILRTVSGSSVQLPIYNWAKRMIEHYNLLEEGMIKHLTASAVSGFGVCCTMQIFDTVMTRMYNQKNKELYKNPIDCILKTIRSEGFFALYKGFGAHLARIAPHTIFCLTFVEQTNKLFLKFQKD</sequence>